<feature type="chain" id="PRO_0000368900" description="ATP synthase subunit b, chloroplastic">
    <location>
        <begin position="1"/>
        <end position="184"/>
    </location>
</feature>
<feature type="transmembrane region" description="Helical" evidence="1">
    <location>
        <begin position="27"/>
        <end position="49"/>
    </location>
</feature>
<reference key="1">
    <citation type="submission" date="2007-03" db="EMBL/GenBank/DDBJ databases">
        <title>Sequencing analysis of Aethionema coridifolium chloroplast DNA.</title>
        <authorList>
            <person name="Hosouchi T."/>
            <person name="Tsuruoka H."/>
            <person name="Kotani H."/>
        </authorList>
    </citation>
    <scope>NUCLEOTIDE SEQUENCE [LARGE SCALE GENOMIC DNA]</scope>
</reference>
<sequence length="184" mass="21184">MKNVTDSFVYLGHWPSAGSFGFNTDILATNLINLSVVFGVLIFFGKGVLNDLLDNRKQRILNTIRNSEELREGAIQQLENARARLRKVEKEADQFRVNGYSEIEREKLNLINSTYRTLKQLENYKNETILFEQQRTINQVRERVFQQALQGAIVTLKSCLSNELHLRTINANIGMFGTMKEITD</sequence>
<protein>
    <recommendedName>
        <fullName evidence="1">ATP synthase subunit b, chloroplastic</fullName>
    </recommendedName>
    <alternativeName>
        <fullName evidence="1">ATP synthase F(0) sector subunit b</fullName>
    </alternativeName>
    <alternativeName>
        <fullName evidence="1">ATPase subunit I</fullName>
    </alternativeName>
</protein>
<keyword id="KW-0066">ATP synthesis</keyword>
<keyword id="KW-0138">CF(0)</keyword>
<keyword id="KW-0150">Chloroplast</keyword>
<keyword id="KW-0375">Hydrogen ion transport</keyword>
<keyword id="KW-0406">Ion transport</keyword>
<keyword id="KW-0472">Membrane</keyword>
<keyword id="KW-0934">Plastid</keyword>
<keyword id="KW-0793">Thylakoid</keyword>
<keyword id="KW-0812">Transmembrane</keyword>
<keyword id="KW-1133">Transmembrane helix</keyword>
<keyword id="KW-0813">Transport</keyword>
<proteinExistence type="inferred from homology"/>
<gene>
    <name evidence="1" type="primary">atpF</name>
</gene>
<dbReference type="EMBL" id="AP009366">
    <property type="protein sequence ID" value="BAF49756.1"/>
    <property type="molecule type" value="Genomic_DNA"/>
</dbReference>
<dbReference type="RefSeq" id="YP_001122932.1">
    <property type="nucleotide sequence ID" value="NC_009265.1"/>
</dbReference>
<dbReference type="SMR" id="A4QJA1"/>
<dbReference type="GeneID" id="4968634"/>
<dbReference type="GO" id="GO:0009535">
    <property type="term" value="C:chloroplast thylakoid membrane"/>
    <property type="evidence" value="ECO:0007669"/>
    <property type="project" value="UniProtKB-SubCell"/>
</dbReference>
<dbReference type="GO" id="GO:0045259">
    <property type="term" value="C:proton-transporting ATP synthase complex"/>
    <property type="evidence" value="ECO:0007669"/>
    <property type="project" value="UniProtKB-KW"/>
</dbReference>
<dbReference type="GO" id="GO:0046933">
    <property type="term" value="F:proton-transporting ATP synthase activity, rotational mechanism"/>
    <property type="evidence" value="ECO:0007669"/>
    <property type="project" value="UniProtKB-UniRule"/>
</dbReference>
<dbReference type="CDD" id="cd06503">
    <property type="entry name" value="ATP-synt_Fo_b"/>
    <property type="match status" value="1"/>
</dbReference>
<dbReference type="HAMAP" id="MF_01398">
    <property type="entry name" value="ATP_synth_b_bprime"/>
    <property type="match status" value="1"/>
</dbReference>
<dbReference type="InterPro" id="IPR002146">
    <property type="entry name" value="ATP_synth_b/b'su_bac/chlpt"/>
</dbReference>
<dbReference type="PANTHER" id="PTHR34264">
    <property type="entry name" value="ATP SYNTHASE SUBUNIT B, CHLOROPLASTIC"/>
    <property type="match status" value="1"/>
</dbReference>
<dbReference type="PANTHER" id="PTHR34264:SF3">
    <property type="entry name" value="ATP SYNTHASE SUBUNIT B, CHLOROPLASTIC"/>
    <property type="match status" value="1"/>
</dbReference>
<dbReference type="Pfam" id="PF00430">
    <property type="entry name" value="ATP-synt_B"/>
    <property type="match status" value="1"/>
</dbReference>
<evidence type="ECO:0000255" key="1">
    <source>
        <dbReference type="HAMAP-Rule" id="MF_01398"/>
    </source>
</evidence>
<accession>A4QJA1</accession>
<name>ATPF_AETCO</name>
<comment type="function">
    <text evidence="1">F(1)F(0) ATP synthase produces ATP from ADP in the presence of a proton or sodium gradient. F-type ATPases consist of two structural domains, F(1) containing the extramembraneous catalytic core and F(0) containing the membrane proton channel, linked together by a central stalk and a peripheral stalk. During catalysis, ATP synthesis in the catalytic domain of F(1) is coupled via a rotary mechanism of the central stalk subunits to proton translocation.</text>
</comment>
<comment type="function">
    <text evidence="1">Component of the F(0) channel, it forms part of the peripheral stalk, linking F(1) to F(0).</text>
</comment>
<comment type="subunit">
    <text evidence="1">F-type ATPases have 2 components, F(1) - the catalytic core - and F(0) - the membrane proton channel. F(1) has five subunits: alpha(3), beta(3), gamma(1), delta(1), epsilon(1). F(0) has four main subunits: a(1), b(1), b'(1) and c(10-14). The alpha and beta chains form an alternating ring which encloses part of the gamma chain. F(1) is attached to F(0) by a central stalk formed by the gamma and epsilon chains, while a peripheral stalk is formed by the delta, b and b' chains.</text>
</comment>
<comment type="subcellular location">
    <subcellularLocation>
        <location evidence="1">Plastid</location>
        <location evidence="1">Chloroplast thylakoid membrane</location>
        <topology evidence="1">Single-pass membrane protein</topology>
    </subcellularLocation>
</comment>
<comment type="miscellaneous">
    <text>In plastids the F-type ATPase is also known as CF(1)CF(0).</text>
</comment>
<comment type="similarity">
    <text evidence="1">Belongs to the ATPase B chain family.</text>
</comment>
<organism>
    <name type="scientific">Aethionema cordifolium</name>
    <name type="common">Lebanon stonecress</name>
    <dbReference type="NCBI Taxonomy" id="434059"/>
    <lineage>
        <taxon>Eukaryota</taxon>
        <taxon>Viridiplantae</taxon>
        <taxon>Streptophyta</taxon>
        <taxon>Embryophyta</taxon>
        <taxon>Tracheophyta</taxon>
        <taxon>Spermatophyta</taxon>
        <taxon>Magnoliopsida</taxon>
        <taxon>eudicotyledons</taxon>
        <taxon>Gunneridae</taxon>
        <taxon>Pentapetalae</taxon>
        <taxon>rosids</taxon>
        <taxon>malvids</taxon>
        <taxon>Brassicales</taxon>
        <taxon>Brassicaceae</taxon>
        <taxon>Aethionemeae</taxon>
        <taxon>Aethionema</taxon>
    </lineage>
</organism>
<geneLocation type="chloroplast"/>